<evidence type="ECO:0000250" key="1"/>
<evidence type="ECO:0000250" key="2">
    <source>
        <dbReference type="UniProtKB" id="P85986"/>
    </source>
</evidence>
<evidence type="ECO:0000250" key="3">
    <source>
        <dbReference type="UniProtKB" id="Q62261"/>
    </source>
</evidence>
<evidence type="ECO:0000255" key="4"/>
<evidence type="ECO:0000255" key="5">
    <source>
        <dbReference type="PROSITE-ProRule" id="PRU00044"/>
    </source>
</evidence>
<evidence type="ECO:0000255" key="6">
    <source>
        <dbReference type="PROSITE-ProRule" id="PRU00145"/>
    </source>
</evidence>
<evidence type="ECO:0000256" key="7">
    <source>
        <dbReference type="SAM" id="MobiDB-lite"/>
    </source>
</evidence>
<evidence type="ECO:0000269" key="8">
    <source>
    </source>
</evidence>
<evidence type="ECO:0000269" key="9">
    <source>
    </source>
</evidence>
<evidence type="ECO:0000269" key="10">
    <source>
    </source>
</evidence>
<evidence type="ECO:0000269" key="11">
    <source>
    </source>
</evidence>
<evidence type="ECO:0000269" key="12">
    <source>
    </source>
</evidence>
<evidence type="ECO:0000303" key="13">
    <source>
    </source>
</evidence>
<evidence type="ECO:0000303" key="14">
    <source>
    </source>
</evidence>
<evidence type="ECO:0000303" key="15">
    <source>
    </source>
</evidence>
<evidence type="ECO:0000305" key="16"/>
<evidence type="ECO:0007744" key="17">
    <source>
    </source>
</evidence>
<evidence type="ECO:0007744" key="18">
    <source>
    </source>
</evidence>
<evidence type="ECO:0007744" key="19">
    <source>
    </source>
</evidence>
<evidence type="ECO:0007744" key="20">
    <source>
    </source>
</evidence>
<evidence type="ECO:0007744" key="21">
    <source>
    </source>
</evidence>
<evidence type="ECO:0007744" key="22">
    <source>
    </source>
</evidence>
<evidence type="ECO:0007744" key="23">
    <source>
    </source>
</evidence>
<evidence type="ECO:0007744" key="24">
    <source>
    </source>
</evidence>
<evidence type="ECO:0007744" key="25">
    <source>
    </source>
</evidence>
<evidence type="ECO:0007744" key="26">
    <source>
    </source>
</evidence>
<evidence type="ECO:0007744" key="27">
    <source>
    </source>
</evidence>
<evidence type="ECO:0007744" key="28">
    <source>
    </source>
</evidence>
<evidence type="ECO:0007744" key="29">
    <source>
    </source>
</evidence>
<evidence type="ECO:0007744" key="30">
    <source>
    </source>
</evidence>
<evidence type="ECO:0007744" key="31">
    <source>
    </source>
</evidence>
<evidence type="ECO:0007829" key="32">
    <source>
        <dbReference type="PDB" id="1BKR"/>
    </source>
</evidence>
<evidence type="ECO:0007829" key="33">
    <source>
        <dbReference type="PDB" id="3EDV"/>
    </source>
</evidence>
<accession>Q01082</accession>
<accession>B2RP63</accession>
<accession>O60837</accession>
<accession>Q16057</accession>
<accession>Q53R99</accession>
<accession>Q59ER3</accession>
<accession>Q8IX99</accession>
<gene>
    <name type="primary">SPTBN1</name>
    <name type="synonym">SPTB2</name>
</gene>
<protein>
    <recommendedName>
        <fullName>Spectrin beta chain, non-erythrocytic 1</fullName>
    </recommendedName>
    <alternativeName>
        <fullName>Beta-II spectrin</fullName>
    </alternativeName>
    <alternativeName>
        <fullName>Fodrin beta chain</fullName>
    </alternativeName>
    <alternativeName>
        <fullName>Spectrin, non-erythroid beta chain 1</fullName>
    </alternativeName>
</protein>
<organism>
    <name type="scientific">Homo sapiens</name>
    <name type="common">Human</name>
    <dbReference type="NCBI Taxonomy" id="9606"/>
    <lineage>
        <taxon>Eukaryota</taxon>
        <taxon>Metazoa</taxon>
        <taxon>Chordata</taxon>
        <taxon>Craniata</taxon>
        <taxon>Vertebrata</taxon>
        <taxon>Euteleostomi</taxon>
        <taxon>Mammalia</taxon>
        <taxon>Eutheria</taxon>
        <taxon>Euarchontoglires</taxon>
        <taxon>Primates</taxon>
        <taxon>Haplorrhini</taxon>
        <taxon>Catarrhini</taxon>
        <taxon>Hominidae</taxon>
        <taxon>Homo</taxon>
    </lineage>
</organism>
<proteinExistence type="evidence at protein level"/>
<dbReference type="EMBL" id="M96803">
    <property type="protein sequence ID" value="AAA60580.1"/>
    <property type="molecule type" value="mRNA"/>
</dbReference>
<dbReference type="EMBL" id="AF327441">
    <property type="protein sequence ID" value="AAO15362.1"/>
    <property type="molecule type" value="mRNA"/>
</dbReference>
<dbReference type="EMBL" id="AB209748">
    <property type="protein sequence ID" value="BAD92985.1"/>
    <property type="status" value="ALT_INIT"/>
    <property type="molecule type" value="mRNA"/>
</dbReference>
<dbReference type="EMBL" id="AC093110">
    <property type="protein sequence ID" value="AAY24229.1"/>
    <property type="molecule type" value="Genomic_DNA"/>
</dbReference>
<dbReference type="EMBL" id="AC092839">
    <property type="status" value="NOT_ANNOTATED_CDS"/>
    <property type="molecule type" value="Genomic_DNA"/>
</dbReference>
<dbReference type="EMBL" id="CH471053">
    <property type="protein sequence ID" value="EAX00147.1"/>
    <property type="molecule type" value="Genomic_DNA"/>
</dbReference>
<dbReference type="EMBL" id="BC137282">
    <property type="protein sequence ID" value="AAI37283.1"/>
    <property type="molecule type" value="mRNA"/>
</dbReference>
<dbReference type="EMBL" id="BC137283">
    <property type="protein sequence ID" value="AAI37284.1"/>
    <property type="molecule type" value="mRNA"/>
</dbReference>
<dbReference type="EMBL" id="S65762">
    <property type="protein sequence ID" value="AAB28324.1"/>
    <property type="molecule type" value="mRNA"/>
</dbReference>
<dbReference type="EMBL" id="AJ005694">
    <property type="protein sequence ID" value="CAA06678.1"/>
    <property type="molecule type" value="mRNA"/>
</dbReference>
<dbReference type="EMBL" id="AJ238723">
    <property type="protein sequence ID" value="CAB91088.1"/>
    <property type="molecule type" value="Genomic_DNA"/>
</dbReference>
<dbReference type="CCDS" id="CCDS33198.1">
    <molecule id="Q01082-1"/>
</dbReference>
<dbReference type="CCDS" id="CCDS33199.1">
    <molecule id="Q01082-3"/>
</dbReference>
<dbReference type="PIR" id="A44159">
    <property type="entry name" value="A44159"/>
</dbReference>
<dbReference type="PIR" id="A47213">
    <property type="entry name" value="A47213"/>
</dbReference>
<dbReference type="RefSeq" id="NP_003119.2">
    <molecule id="Q01082-1"/>
    <property type="nucleotide sequence ID" value="NM_003128.3"/>
</dbReference>
<dbReference type="RefSeq" id="NP_842565.2">
    <molecule id="Q01082-3"/>
    <property type="nucleotide sequence ID" value="NM_178313.3"/>
</dbReference>
<dbReference type="RefSeq" id="XP_005264574.1">
    <molecule id="Q01082-1"/>
    <property type="nucleotide sequence ID" value="XM_005264517.3"/>
</dbReference>
<dbReference type="RefSeq" id="XP_006712150.1">
    <molecule id="Q01082-1"/>
    <property type="nucleotide sequence ID" value="XM_006712087.4"/>
</dbReference>
<dbReference type="RefSeq" id="XP_016860268.1">
    <molecule id="Q01082-1"/>
    <property type="nucleotide sequence ID" value="XM_017004779.2"/>
</dbReference>
<dbReference type="RefSeq" id="XP_016860269.1">
    <molecule id="Q01082-1"/>
    <property type="nucleotide sequence ID" value="XM_017004780.2"/>
</dbReference>
<dbReference type="RefSeq" id="XP_016860270.1">
    <molecule id="Q01082-1"/>
    <property type="nucleotide sequence ID" value="XM_017004781.2"/>
</dbReference>
<dbReference type="RefSeq" id="XP_047301547.1">
    <molecule id="Q01082-1"/>
    <property type="nucleotide sequence ID" value="XM_047445591.1"/>
</dbReference>
<dbReference type="RefSeq" id="XP_047301548.1">
    <molecule id="Q01082-1"/>
    <property type="nucleotide sequence ID" value="XM_047445592.1"/>
</dbReference>
<dbReference type="RefSeq" id="XP_047301549.1">
    <molecule id="Q01082-1"/>
    <property type="nucleotide sequence ID" value="XM_047445593.1"/>
</dbReference>
<dbReference type="RefSeq" id="XP_047301550.1">
    <molecule id="Q01082-1"/>
    <property type="nucleotide sequence ID" value="XM_047445594.1"/>
</dbReference>
<dbReference type="RefSeq" id="XP_047301551.1">
    <molecule id="Q01082-1"/>
    <property type="nucleotide sequence ID" value="XM_047445595.1"/>
</dbReference>
<dbReference type="RefSeq" id="XP_054199513.1">
    <molecule id="Q01082-1"/>
    <property type="nucleotide sequence ID" value="XM_054343538.1"/>
</dbReference>
<dbReference type="RefSeq" id="XP_054199514.1">
    <molecule id="Q01082-1"/>
    <property type="nucleotide sequence ID" value="XM_054343539.1"/>
</dbReference>
<dbReference type="RefSeq" id="XP_054199515.1">
    <molecule id="Q01082-1"/>
    <property type="nucleotide sequence ID" value="XM_054343540.1"/>
</dbReference>
<dbReference type="RefSeq" id="XP_054199516.1">
    <molecule id="Q01082-1"/>
    <property type="nucleotide sequence ID" value="XM_054343541.1"/>
</dbReference>
<dbReference type="RefSeq" id="XP_054199517.1">
    <molecule id="Q01082-1"/>
    <property type="nucleotide sequence ID" value="XM_054343542.1"/>
</dbReference>
<dbReference type="RefSeq" id="XP_054199518.1">
    <molecule id="Q01082-1"/>
    <property type="nucleotide sequence ID" value="XM_054343543.1"/>
</dbReference>
<dbReference type="RefSeq" id="XP_054199519.1">
    <molecule id="Q01082-1"/>
    <property type="nucleotide sequence ID" value="XM_054343544.1"/>
</dbReference>
<dbReference type="RefSeq" id="XP_054199520.1">
    <molecule id="Q01082-1"/>
    <property type="nucleotide sequence ID" value="XM_054343545.1"/>
</dbReference>
<dbReference type="RefSeq" id="XP_054199521.1">
    <molecule id="Q01082-1"/>
    <property type="nucleotide sequence ID" value="XM_054343546.1"/>
</dbReference>
<dbReference type="RefSeq" id="XP_054199522.1">
    <molecule id="Q01082-1"/>
    <property type="nucleotide sequence ID" value="XM_054343547.1"/>
</dbReference>
<dbReference type="PDB" id="1AA2">
    <property type="method" value="X-ray"/>
    <property type="resolution" value="2.00 A"/>
    <property type="chains" value="A=173-280"/>
</dbReference>
<dbReference type="PDB" id="1BKR">
    <property type="method" value="X-ray"/>
    <property type="resolution" value="1.10 A"/>
    <property type="chains" value="A=172-280"/>
</dbReference>
<dbReference type="PDB" id="3EDV">
    <property type="method" value="X-ray"/>
    <property type="resolution" value="1.95 A"/>
    <property type="chains" value="A/B=1697-2015"/>
</dbReference>
<dbReference type="PDBsum" id="1AA2"/>
<dbReference type="PDBsum" id="1BKR"/>
<dbReference type="PDBsum" id="3EDV"/>
<dbReference type="SMR" id="Q01082"/>
<dbReference type="BioGRID" id="112589">
    <property type="interactions" value="421"/>
</dbReference>
<dbReference type="DIP" id="DIP-33182N"/>
<dbReference type="ELM" id="Q01082"/>
<dbReference type="FunCoup" id="Q01082">
    <property type="interactions" value="1348"/>
</dbReference>
<dbReference type="IntAct" id="Q01082">
    <property type="interactions" value="165"/>
</dbReference>
<dbReference type="MINT" id="Q01082"/>
<dbReference type="STRING" id="9606.ENSP00000349259"/>
<dbReference type="DrugBank" id="DB03401">
    <property type="generic name" value="1D-myo-inositol 1,4,5-trisphosphate"/>
</dbReference>
<dbReference type="DrugBank" id="DB01373">
    <property type="generic name" value="Calcium"/>
</dbReference>
<dbReference type="TCDB" id="8.A.66.1.10">
    <property type="family name" value="the dystrophin (dystrophin) family"/>
</dbReference>
<dbReference type="GlyCosmos" id="Q01082">
    <property type="glycosylation" value="20 sites, 2 glycans"/>
</dbReference>
<dbReference type="GlyGen" id="Q01082">
    <property type="glycosylation" value="33 sites, 1 N-linked glycan (1 site), 2 O-linked glycans (32 sites)"/>
</dbReference>
<dbReference type="iPTMnet" id="Q01082"/>
<dbReference type="MetOSite" id="Q01082"/>
<dbReference type="PhosphoSitePlus" id="Q01082"/>
<dbReference type="SwissPalm" id="Q01082"/>
<dbReference type="BioMuta" id="SPTBN1"/>
<dbReference type="DMDM" id="116242799"/>
<dbReference type="CPTAC" id="CPTAC-590"/>
<dbReference type="jPOST" id="Q01082"/>
<dbReference type="MassIVE" id="Q01082"/>
<dbReference type="PaxDb" id="9606-ENSP00000349259"/>
<dbReference type="PeptideAtlas" id="Q01082"/>
<dbReference type="ProteomicsDB" id="57910">
    <molecule id="Q01082-1"/>
</dbReference>
<dbReference type="ProteomicsDB" id="57911">
    <molecule id="Q01082-2"/>
</dbReference>
<dbReference type="ProteomicsDB" id="57912">
    <molecule id="Q01082-3"/>
</dbReference>
<dbReference type="Pumba" id="Q01082"/>
<dbReference type="Antibodypedia" id="2181">
    <property type="antibodies" value="194 antibodies from 34 providers"/>
</dbReference>
<dbReference type="DNASU" id="6711"/>
<dbReference type="Ensembl" id="ENST00000333896.5">
    <molecule id="Q01082-3"/>
    <property type="protein sequence ID" value="ENSP00000334156.5"/>
    <property type="gene ID" value="ENSG00000115306.17"/>
</dbReference>
<dbReference type="Ensembl" id="ENST00000356805.9">
    <molecule id="Q01082-1"/>
    <property type="protein sequence ID" value="ENSP00000349259.4"/>
    <property type="gene ID" value="ENSG00000115306.17"/>
</dbReference>
<dbReference type="GeneID" id="6711"/>
<dbReference type="KEGG" id="hsa:6711"/>
<dbReference type="MANE-Select" id="ENST00000356805.9">
    <property type="protein sequence ID" value="ENSP00000349259.4"/>
    <property type="RefSeq nucleotide sequence ID" value="NM_003128.3"/>
    <property type="RefSeq protein sequence ID" value="NP_003119.2"/>
</dbReference>
<dbReference type="UCSC" id="uc002rxu.4">
    <molecule id="Q01082-1"/>
    <property type="organism name" value="human"/>
</dbReference>
<dbReference type="AGR" id="HGNC:11275"/>
<dbReference type="CTD" id="6711"/>
<dbReference type="DisGeNET" id="6711"/>
<dbReference type="GeneCards" id="SPTBN1"/>
<dbReference type="HGNC" id="HGNC:11275">
    <property type="gene designation" value="SPTBN1"/>
</dbReference>
<dbReference type="HPA" id="ENSG00000115306">
    <property type="expression patterns" value="Low tissue specificity"/>
</dbReference>
<dbReference type="MalaCards" id="SPTBN1"/>
<dbReference type="MIM" id="182790">
    <property type="type" value="gene"/>
</dbReference>
<dbReference type="MIM" id="619475">
    <property type="type" value="phenotype"/>
</dbReference>
<dbReference type="neXtProt" id="NX_Q01082"/>
<dbReference type="OpenTargets" id="ENSG00000115306"/>
<dbReference type="Orphanet" id="528084">
    <property type="disease" value="Non-specific syndromic intellectual disability"/>
</dbReference>
<dbReference type="PharmGKB" id="PA36104"/>
<dbReference type="VEuPathDB" id="HostDB:ENSG00000115306"/>
<dbReference type="eggNOG" id="KOG0517">
    <property type="taxonomic scope" value="Eukaryota"/>
</dbReference>
<dbReference type="GeneTree" id="ENSGT00940000154864"/>
<dbReference type="HOGENOM" id="CLU_000146_0_0_1"/>
<dbReference type="InParanoid" id="Q01082"/>
<dbReference type="OrthoDB" id="5865767at2759"/>
<dbReference type="PAN-GO" id="Q01082">
    <property type="GO annotations" value="7 GO annotations based on evolutionary models"/>
</dbReference>
<dbReference type="PhylomeDB" id="Q01082"/>
<dbReference type="TreeFam" id="TF313446"/>
<dbReference type="PathwayCommons" id="Q01082"/>
<dbReference type="Reactome" id="R-HSA-373753">
    <property type="pathway name" value="Nephrin family interactions"/>
</dbReference>
<dbReference type="Reactome" id="R-HSA-375165">
    <property type="pathway name" value="NCAM signaling for neurite out-growth"/>
</dbReference>
<dbReference type="Reactome" id="R-HSA-445095">
    <property type="pathway name" value="Interaction between L1 and Ankyrins"/>
</dbReference>
<dbReference type="Reactome" id="R-HSA-5673001">
    <property type="pathway name" value="RAF/MAP kinase cascade"/>
</dbReference>
<dbReference type="Reactome" id="R-HSA-6807878">
    <property type="pathway name" value="COPI-mediated anterograde transport"/>
</dbReference>
<dbReference type="Reactome" id="R-HSA-9013420">
    <property type="pathway name" value="RHOU GTPase cycle"/>
</dbReference>
<dbReference type="Reactome" id="R-HSA-9013424">
    <property type="pathway name" value="RHOV GTPase cycle"/>
</dbReference>
<dbReference type="Reactome" id="R-HSA-9662360">
    <property type="pathway name" value="Sensory processing of sound by inner hair cells of the cochlea"/>
</dbReference>
<dbReference type="Reactome" id="R-HSA-9662361">
    <property type="pathway name" value="Sensory processing of sound by outer hair cells of the cochlea"/>
</dbReference>
<dbReference type="Reactome" id="R-HSA-9703465">
    <property type="pathway name" value="Signaling by FLT3 fusion proteins"/>
</dbReference>
<dbReference type="SignaLink" id="Q01082"/>
<dbReference type="SIGNOR" id="Q01082"/>
<dbReference type="BioGRID-ORCS" id="6711">
    <property type="hits" value="23 hits in 1173 CRISPR screens"/>
</dbReference>
<dbReference type="CD-CODE" id="232F8A39">
    <property type="entry name" value="P-body"/>
</dbReference>
<dbReference type="CD-CODE" id="FB4E32DD">
    <property type="entry name" value="Presynaptic clusters and postsynaptic densities"/>
</dbReference>
<dbReference type="ChiTaRS" id="SPTBN1">
    <property type="organism name" value="human"/>
</dbReference>
<dbReference type="EvolutionaryTrace" id="Q01082"/>
<dbReference type="GeneWiki" id="SPTBN1"/>
<dbReference type="GenomeRNAi" id="6711"/>
<dbReference type="Pharos" id="Q01082">
    <property type="development level" value="Tbio"/>
</dbReference>
<dbReference type="PRO" id="PR:Q01082"/>
<dbReference type="Proteomes" id="UP000005640">
    <property type="component" value="Chromosome 2"/>
</dbReference>
<dbReference type="RNAct" id="Q01082">
    <property type="molecule type" value="protein"/>
</dbReference>
<dbReference type="Bgee" id="ENSG00000115306">
    <property type="expression patterns" value="Expressed in endothelial cell and 220 other cell types or tissues"/>
</dbReference>
<dbReference type="ExpressionAtlas" id="Q01082">
    <property type="expression patterns" value="baseline and differential"/>
</dbReference>
<dbReference type="GO" id="GO:0030673">
    <property type="term" value="C:axolemma"/>
    <property type="evidence" value="ECO:0000250"/>
    <property type="project" value="BHF-UCL"/>
</dbReference>
<dbReference type="GO" id="GO:0030054">
    <property type="term" value="C:cell junction"/>
    <property type="evidence" value="ECO:0000318"/>
    <property type="project" value="GO_Central"/>
</dbReference>
<dbReference type="GO" id="GO:0042995">
    <property type="term" value="C:cell projection"/>
    <property type="evidence" value="ECO:0000318"/>
    <property type="project" value="GO_Central"/>
</dbReference>
<dbReference type="GO" id="GO:0030864">
    <property type="term" value="C:cortical actin cytoskeleton"/>
    <property type="evidence" value="ECO:0000318"/>
    <property type="project" value="GO_Central"/>
</dbReference>
<dbReference type="GO" id="GO:0032437">
    <property type="term" value="C:cuticular plate"/>
    <property type="evidence" value="ECO:0007669"/>
    <property type="project" value="Ensembl"/>
</dbReference>
<dbReference type="GO" id="GO:0005737">
    <property type="term" value="C:cytoplasm"/>
    <property type="evidence" value="ECO:0000314"/>
    <property type="project" value="HGNC-UCL"/>
</dbReference>
<dbReference type="GO" id="GO:0005829">
    <property type="term" value="C:cytosol"/>
    <property type="evidence" value="ECO:0000314"/>
    <property type="project" value="UniProtKB"/>
</dbReference>
<dbReference type="GO" id="GO:0070062">
    <property type="term" value="C:extracellular exosome"/>
    <property type="evidence" value="ECO:0007005"/>
    <property type="project" value="UniProtKB"/>
</dbReference>
<dbReference type="GO" id="GO:0098978">
    <property type="term" value="C:glutamatergic synapse"/>
    <property type="evidence" value="ECO:0007669"/>
    <property type="project" value="Ensembl"/>
</dbReference>
<dbReference type="GO" id="GO:0031430">
    <property type="term" value="C:M band"/>
    <property type="evidence" value="ECO:0007669"/>
    <property type="project" value="UniProtKB-SubCell"/>
</dbReference>
<dbReference type="GO" id="GO:0005730">
    <property type="term" value="C:nucleolus"/>
    <property type="evidence" value="ECO:0000314"/>
    <property type="project" value="HGNC-UCL"/>
</dbReference>
<dbReference type="GO" id="GO:0005886">
    <property type="term" value="C:plasma membrane"/>
    <property type="evidence" value="ECO:0000314"/>
    <property type="project" value="UniProtKB"/>
</dbReference>
<dbReference type="GO" id="GO:0014069">
    <property type="term" value="C:postsynaptic density"/>
    <property type="evidence" value="ECO:0007669"/>
    <property type="project" value="Ensembl"/>
</dbReference>
<dbReference type="GO" id="GO:0008091">
    <property type="term" value="C:spectrin"/>
    <property type="evidence" value="ECO:0000304"/>
    <property type="project" value="ProtInc"/>
</dbReference>
<dbReference type="GO" id="GO:0014731">
    <property type="term" value="C:spectrin-associated cytoskeleton"/>
    <property type="evidence" value="ECO:0000303"/>
    <property type="project" value="BHF-UCL"/>
</dbReference>
<dbReference type="GO" id="GO:0003779">
    <property type="term" value="F:actin binding"/>
    <property type="evidence" value="ECO:0000304"/>
    <property type="project" value="ProtInc"/>
</dbReference>
<dbReference type="GO" id="GO:0051015">
    <property type="term" value="F:actin filament binding"/>
    <property type="evidence" value="ECO:0000318"/>
    <property type="project" value="GO_Central"/>
</dbReference>
<dbReference type="GO" id="GO:0030506">
    <property type="term" value="F:ankyrin binding"/>
    <property type="evidence" value="ECO:0000353"/>
    <property type="project" value="BHF-UCL"/>
</dbReference>
<dbReference type="GO" id="GO:0045296">
    <property type="term" value="F:cadherin binding"/>
    <property type="evidence" value="ECO:0007005"/>
    <property type="project" value="BHF-UCL"/>
</dbReference>
<dbReference type="GO" id="GO:0005516">
    <property type="term" value="F:calmodulin binding"/>
    <property type="evidence" value="ECO:0007669"/>
    <property type="project" value="UniProtKB-KW"/>
</dbReference>
<dbReference type="GO" id="GO:0051020">
    <property type="term" value="F:GTPase binding"/>
    <property type="evidence" value="ECO:0000353"/>
    <property type="project" value="UniProtKB"/>
</dbReference>
<dbReference type="GO" id="GO:0005543">
    <property type="term" value="F:phospholipid binding"/>
    <property type="evidence" value="ECO:0007669"/>
    <property type="project" value="InterPro"/>
</dbReference>
<dbReference type="GO" id="GO:0003723">
    <property type="term" value="F:RNA binding"/>
    <property type="evidence" value="ECO:0007005"/>
    <property type="project" value="UniProtKB"/>
</dbReference>
<dbReference type="GO" id="GO:0005200">
    <property type="term" value="F:structural constituent of cytoskeleton"/>
    <property type="evidence" value="ECO:0000315"/>
    <property type="project" value="UniProtKB"/>
</dbReference>
<dbReference type="GO" id="GO:0030036">
    <property type="term" value="P:actin cytoskeleton organization"/>
    <property type="evidence" value="ECO:0000315"/>
    <property type="project" value="UniProtKB"/>
</dbReference>
<dbReference type="GO" id="GO:0051693">
    <property type="term" value="P:actin filament capping"/>
    <property type="evidence" value="ECO:0007669"/>
    <property type="project" value="UniProtKB-KW"/>
</dbReference>
<dbReference type="GO" id="GO:0007417">
    <property type="term" value="P:central nervous system development"/>
    <property type="evidence" value="ECO:0000315"/>
    <property type="project" value="UniProtKB"/>
</dbReference>
<dbReference type="GO" id="GO:0021556">
    <property type="term" value="P:central nervous system formation"/>
    <property type="evidence" value="ECO:0000315"/>
    <property type="project" value="UniProtKB"/>
</dbReference>
<dbReference type="GO" id="GO:0043001">
    <property type="term" value="P:Golgi to plasma membrane protein transport"/>
    <property type="evidence" value="ECO:0000315"/>
    <property type="project" value="BHF-UCL"/>
</dbReference>
<dbReference type="GO" id="GO:0071709">
    <property type="term" value="P:membrane assembly"/>
    <property type="evidence" value="ECO:0000315"/>
    <property type="project" value="BHF-UCL"/>
</dbReference>
<dbReference type="GO" id="GO:0000281">
    <property type="term" value="P:mitotic cytokinesis"/>
    <property type="evidence" value="ECO:0000315"/>
    <property type="project" value="BHF-UCL"/>
</dbReference>
<dbReference type="GO" id="GO:0007009">
    <property type="term" value="P:plasma membrane organization"/>
    <property type="evidence" value="ECO:0000315"/>
    <property type="project" value="BHF-UCL"/>
</dbReference>
<dbReference type="GO" id="GO:0032743">
    <property type="term" value="P:positive regulation of interleukin-2 production"/>
    <property type="evidence" value="ECO:0000315"/>
    <property type="project" value="UniProtKB"/>
</dbReference>
<dbReference type="GO" id="GO:1903078">
    <property type="term" value="P:positive regulation of protein localization to plasma membrane"/>
    <property type="evidence" value="ECO:0000315"/>
    <property type="project" value="UniProtKB"/>
</dbReference>
<dbReference type="GO" id="GO:0072659">
    <property type="term" value="P:protein localization to plasma membrane"/>
    <property type="evidence" value="ECO:0000315"/>
    <property type="project" value="BHF-UCL"/>
</dbReference>
<dbReference type="GO" id="GO:1903076">
    <property type="term" value="P:regulation of protein localization to plasma membrane"/>
    <property type="evidence" value="ECO:0000316"/>
    <property type="project" value="UniProtKB"/>
</dbReference>
<dbReference type="GO" id="GO:0060390">
    <property type="term" value="P:regulation of SMAD protein signal transduction"/>
    <property type="evidence" value="ECO:0007669"/>
    <property type="project" value="Ensembl"/>
</dbReference>
<dbReference type="CDD" id="cd21248">
    <property type="entry name" value="CH_SPTB_like_rpt2"/>
    <property type="match status" value="1"/>
</dbReference>
<dbReference type="CDD" id="cd21316">
    <property type="entry name" value="CH_SPTBN1_rpt1"/>
    <property type="match status" value="1"/>
</dbReference>
<dbReference type="CDD" id="cd10571">
    <property type="entry name" value="PH_beta_spectrin"/>
    <property type="match status" value="1"/>
</dbReference>
<dbReference type="CDD" id="cd00176">
    <property type="entry name" value="SPEC"/>
    <property type="match status" value="8"/>
</dbReference>
<dbReference type="FunFam" id="1.10.418.10:FF:000003">
    <property type="entry name" value="Spectrin beta chain"/>
    <property type="match status" value="1"/>
</dbReference>
<dbReference type="FunFam" id="1.10.418.10:FF:000004">
    <property type="entry name" value="Spectrin beta chain"/>
    <property type="match status" value="1"/>
</dbReference>
<dbReference type="FunFam" id="1.20.58.60:FF:000011">
    <property type="entry name" value="Spectrin beta chain"/>
    <property type="match status" value="1"/>
</dbReference>
<dbReference type="FunFam" id="1.20.58.60:FF:000018">
    <property type="entry name" value="Spectrin beta chain"/>
    <property type="match status" value="1"/>
</dbReference>
<dbReference type="FunFam" id="1.20.58.60:FF:000019">
    <property type="entry name" value="Spectrin beta chain"/>
    <property type="match status" value="1"/>
</dbReference>
<dbReference type="FunFam" id="1.20.58.60:FF:000028">
    <property type="entry name" value="Spectrin beta chain"/>
    <property type="match status" value="1"/>
</dbReference>
<dbReference type="FunFam" id="1.20.58.60:FF:000033">
    <property type="entry name" value="Spectrin beta chain"/>
    <property type="match status" value="1"/>
</dbReference>
<dbReference type="FunFam" id="1.20.58.60:FF:000059">
    <property type="entry name" value="Spectrin beta chain"/>
    <property type="match status" value="1"/>
</dbReference>
<dbReference type="FunFam" id="1.20.58.60:FF:000083">
    <property type="entry name" value="Spectrin beta chain"/>
    <property type="match status" value="1"/>
</dbReference>
<dbReference type="FunFam" id="1.20.58.60:FF:000099">
    <property type="entry name" value="Spectrin beta chain"/>
    <property type="match status" value="1"/>
</dbReference>
<dbReference type="FunFam" id="1.20.58.60:FF:000105">
    <property type="entry name" value="Spectrin beta chain"/>
    <property type="match status" value="1"/>
</dbReference>
<dbReference type="FunFam" id="1.20.58.60:FF:000153">
    <property type="entry name" value="Spectrin beta chain"/>
    <property type="match status" value="1"/>
</dbReference>
<dbReference type="FunFam" id="1.20.58.60:FF:000158">
    <property type="entry name" value="Spectrin beta chain"/>
    <property type="match status" value="1"/>
</dbReference>
<dbReference type="FunFam" id="2.30.29.30:FF:000024">
    <property type="entry name" value="Spectrin beta chain"/>
    <property type="match status" value="1"/>
</dbReference>
<dbReference type="Gene3D" id="1.20.58.60">
    <property type="match status" value="12"/>
</dbReference>
<dbReference type="Gene3D" id="1.10.418.10">
    <property type="entry name" value="Calponin-like domain"/>
    <property type="match status" value="2"/>
</dbReference>
<dbReference type="Gene3D" id="2.30.29.30">
    <property type="entry name" value="Pleckstrin-homology domain (PH domain)/Phosphotyrosine-binding domain (PTB)"/>
    <property type="match status" value="1"/>
</dbReference>
<dbReference type="InterPro" id="IPR001589">
    <property type="entry name" value="Actinin_actin-bd_CS"/>
</dbReference>
<dbReference type="InterPro" id="IPR001715">
    <property type="entry name" value="CH_dom"/>
</dbReference>
<dbReference type="InterPro" id="IPR036872">
    <property type="entry name" value="CH_dom_sf"/>
</dbReference>
<dbReference type="InterPro" id="IPR011993">
    <property type="entry name" value="PH-like_dom_sf"/>
</dbReference>
<dbReference type="InterPro" id="IPR041681">
    <property type="entry name" value="PH_9"/>
</dbReference>
<dbReference type="InterPro" id="IPR001605">
    <property type="entry name" value="PH_dom-spectrin-type"/>
</dbReference>
<dbReference type="InterPro" id="IPR001849">
    <property type="entry name" value="PH_domain"/>
</dbReference>
<dbReference type="InterPro" id="IPR018159">
    <property type="entry name" value="Spectrin/alpha-actinin"/>
</dbReference>
<dbReference type="InterPro" id="IPR016343">
    <property type="entry name" value="Spectrin_bsu"/>
</dbReference>
<dbReference type="InterPro" id="IPR002017">
    <property type="entry name" value="Spectrin_repeat"/>
</dbReference>
<dbReference type="PANTHER" id="PTHR11915">
    <property type="entry name" value="SPECTRIN/FILAMIN RELATED CYTOSKELETAL PROTEIN"/>
    <property type="match status" value="1"/>
</dbReference>
<dbReference type="Pfam" id="PF00307">
    <property type="entry name" value="CH"/>
    <property type="match status" value="2"/>
</dbReference>
<dbReference type="Pfam" id="PF15410">
    <property type="entry name" value="PH_9"/>
    <property type="match status" value="1"/>
</dbReference>
<dbReference type="Pfam" id="PF00435">
    <property type="entry name" value="Spectrin"/>
    <property type="match status" value="17"/>
</dbReference>
<dbReference type="PIRSF" id="PIRSF002297">
    <property type="entry name" value="Spectrin_beta_subunit"/>
    <property type="match status" value="1"/>
</dbReference>
<dbReference type="PRINTS" id="PR00683">
    <property type="entry name" value="SPECTRINPH"/>
</dbReference>
<dbReference type="SMART" id="SM00033">
    <property type="entry name" value="CH"/>
    <property type="match status" value="2"/>
</dbReference>
<dbReference type="SMART" id="SM00233">
    <property type="entry name" value="PH"/>
    <property type="match status" value="1"/>
</dbReference>
<dbReference type="SMART" id="SM00150">
    <property type="entry name" value="SPEC"/>
    <property type="match status" value="17"/>
</dbReference>
<dbReference type="SUPFAM" id="SSF47576">
    <property type="entry name" value="Calponin-homology domain, CH-domain"/>
    <property type="match status" value="1"/>
</dbReference>
<dbReference type="SUPFAM" id="SSF50729">
    <property type="entry name" value="PH domain-like"/>
    <property type="match status" value="1"/>
</dbReference>
<dbReference type="SUPFAM" id="SSF46966">
    <property type="entry name" value="Spectrin repeat"/>
    <property type="match status" value="14"/>
</dbReference>
<dbReference type="PROSITE" id="PS00019">
    <property type="entry name" value="ACTININ_1"/>
    <property type="match status" value="1"/>
</dbReference>
<dbReference type="PROSITE" id="PS00020">
    <property type="entry name" value="ACTININ_2"/>
    <property type="match status" value="1"/>
</dbReference>
<dbReference type="PROSITE" id="PS50021">
    <property type="entry name" value="CH"/>
    <property type="match status" value="2"/>
</dbReference>
<dbReference type="PROSITE" id="PS50003">
    <property type="entry name" value="PH_DOMAIN"/>
    <property type="match status" value="1"/>
</dbReference>
<sequence length="2364" mass="274609">MTTTVATDYDNIEIQQQYSDVNNRWDVDDWDNENSSARLFERSRIKALADEREAVQKKTFTKWVNSHLARVSCRITDLYTDLRDGRMLIKLLEVLSGERLPKPTKGRMRIHCLENVDKALQFLKEQRVHLENMGSHDIVDGNHRLTLGLIWTIILRFQIQDISVETEDNKEKKSAKDALLLWCQMKTAGYPNVNIHNFTTSWRDGMAFNALIHKHRPDLIDFDKLKKSNAHYNLQNAFNLAEQHLGLTKLLDPEDISVDHPDEKSIITYVVTYYHYFSKMKALAVEGKRIGKVLDNAIETEKMIEKYESLASDLLEWIEQTIIILNNRKFANSLVGVQQQLQAFNTYRTVEKPPKFTEKGNLEVLLFTIQSKMRANNQKVYMPREGKLISDINKAWERLEKAEHERELALRNELIRQEKLEQLARRFDRKAAMRETWLSENQRLVSQDNFGFDLPAVEAATKKHEAIETDIAAYEERVQAVVAVARELEAENYHDIKRITARKDNVIRLWEYLLELLRARRQRLEMNLGLQKIFQEMLYIMDWMDEMKVLVLSQDYGKHLLGVEDLLQKHTLVEADIGIQAERVRGVNASAQKFATDGEGYKPCDPQVIRDRVAHMEFCYQELCQLAAERRARLEESRRLWKFFWEMAEEEGWIREKEKILSSDDYGKDLTSVMRLLSKHRAFEDEMSGRSGHFEQAIKEGEDMIAEEHFGSEKIRERIIYIREQWANLEQLSAIRKKRLEEASLLHQFQADADDIDAWMLDILKIVSSSDVGHDEYSTQSLVKKHKDVAEEIANYRPTLDTLHEQASALPQEHAESPDVRGRLSGIEERYKEVAELTRLRKQALQDTLALYKMFSEADACELWIDEKEQWLNNMQIPEKLEDLEVIQHRFESLEPEMNNQASRVAVVNQIARQLMHSGHPSEKEIKAQQDKLNTRWSQFRELVDRKKDALLSALSIQNYHLECNETKSWIREKTKVIESTQDLGNDLAGVMALQRKLTGMERDLVAIEAKLSDLQKEAEKLESEHPDQAQAILSRLAEISDVWEEMKTTLKNREASLGEASKLQQFLRDLDDFQSWLSRTQTAIASEDMPNTLTEAEKLLTQHENIKNEIDNYEEDYQKMRDMGEMVTQGQTDAQYMFLRQRLQALDTGWNELHKMWENRQNLLSQSHAYQQFLRDTKQAEAFLNNQEYVLAHTEMPTTLEGAEAAIKKQEDFMTTMDANEEKINAVVETGRRLVSDGNINSDRIQEKVDSIDDRHRKNRETASELLMRLKDNRDLQKFLQDCQELSLWINEKMLTAQDMSYDEARNLHSKWLKHQAFMAELASNKEWLDKIEKEGMQLISEKPETEAVVKEKLTGLHKMWEVLESTTQTKAQRLFDANKAELFTQSCADLDKWLHGLESQIQSDDYGKDLTSVNILLKKQQMLENQMEVRKKEIEELQSQAQALSQEGKSTDEVDSKRLTVQTKFMELLEPLNERKHNLLASKEIHQFNRDVEDEILWVGERMPLATSTDHGHNLQTVQLLIKKNQTLQKEIQGHQPRIDDIFERSQNIVTDSSSLSAEAIRQRLADLKQLWGLLIEETEKRHRRLEEAHRAQQYYFDAAEAEAWMSEQELYMMSEEKAKDEQSAVSMLKKHQILEQAVEDYAETVHQLSKTSRALVADSHPESERISMRQSKVDKLYAGLKDLAEERRGKLDERHRLFQLNREVDDLEQWIAEREVVAGSHELGQDYEHVTMLQERFREFARDTGNIGQERVDTVNHLADELINSGHSDAATIAEWKDGLNEAWADLLELIDTRTQILAASYELHKFYHDAKEIFGRIQDKHKKLPEELGRDQNTVETLQRMHTTFEHDIQALGTQVRQLQEDAARLQAAYAGDKADDIQKRENEVLEAWKSLLDACESRRVRLVDTGDKFRFFSMVRDLMLWMEDVIRQIEAQEKPRDVSSVELLMNNHQGIKAEIDARNDSFTTCIELGKSLLARKHYASEEIKEKLLQLTEKRKEMIDKWEDRWEWLRLILEVHQFSRDASVAEAWLLGQEPYLSSREIGQSVDEVEKLIKRHEAFEKSAATWDERFSALERLTTLELLEVRRQQEEEERKRRPPSPEPSTKVSEEAESQQQWDTSKGEQVSQNGLPAEQGSPRMAETVDTSEMVNGATEQRTSSKESSPIPSPTSDRKAKTALPAQSAATLPARTQETPSAQMEGFLNRKHEWEAHNKKASSRSWHNVYCVINNQEMGFYKDAKTAASGIPYHSEVPVSLKEAVCEVALDYKKKKHVFKLRLNDGNEYLFQAKDDEEMNTWIQAISSAISSDKHEVSASTQSTPASSRAQTLPTSVVTITSESSPGKREKDKEKDKEKRFSLFGKKK</sequence>
<feature type="initiator methionine" description="Removed" evidence="23 28 29">
    <location>
        <position position="1"/>
    </location>
</feature>
<feature type="chain" id="PRO_0000073461" description="Spectrin beta chain, non-erythrocytic 1">
    <location>
        <begin position="2"/>
        <end position="2364"/>
    </location>
</feature>
<feature type="domain" description="Calponin-homology (CH) 1" evidence="5">
    <location>
        <begin position="54"/>
        <end position="158"/>
    </location>
</feature>
<feature type="domain" description="Calponin-homology (CH) 2" evidence="5">
    <location>
        <begin position="173"/>
        <end position="278"/>
    </location>
</feature>
<feature type="repeat" description="Spectrin 1" evidence="4">
    <location>
        <begin position="303"/>
        <end position="411"/>
    </location>
</feature>
<feature type="repeat" description="Spectrin 2" evidence="4">
    <location>
        <begin position="423"/>
        <end position="525"/>
    </location>
</feature>
<feature type="repeat" description="Spectrin 3" evidence="4">
    <location>
        <begin position="530"/>
        <end position="636"/>
    </location>
</feature>
<feature type="repeat" description="Spectrin 4" evidence="4">
    <location>
        <begin position="639"/>
        <end position="742"/>
    </location>
</feature>
<feature type="repeat" description="Spectrin 5" evidence="4">
    <location>
        <begin position="745"/>
        <end position="847"/>
    </location>
</feature>
<feature type="repeat" description="Spectrin 6" evidence="4">
    <location>
        <begin position="850"/>
        <end position="952"/>
    </location>
</feature>
<feature type="repeat" description="Spectrin 7" evidence="4">
    <location>
        <begin position="957"/>
        <end position="1060"/>
    </location>
</feature>
<feature type="repeat" description="Spectrin 8" evidence="4">
    <location>
        <begin position="1063"/>
        <end position="1166"/>
    </location>
</feature>
<feature type="repeat" description="Spectrin 9" evidence="4">
    <location>
        <begin position="1170"/>
        <end position="1258"/>
    </location>
</feature>
<feature type="repeat" description="Spectrin 10" evidence="4">
    <location>
        <begin position="1276"/>
        <end position="1376"/>
    </location>
</feature>
<feature type="repeat" description="Spectrin 11" evidence="4">
    <location>
        <begin position="1381"/>
        <end position="1482"/>
    </location>
</feature>
<feature type="repeat" description="Spectrin 12" evidence="4">
    <location>
        <begin position="1486"/>
        <end position="1590"/>
    </location>
</feature>
<feature type="repeat" description="Spectrin 13" evidence="4">
    <location>
        <begin position="1592"/>
        <end position="1696"/>
    </location>
</feature>
<feature type="repeat" description="Spectrin 14" evidence="4">
    <location>
        <begin position="1698"/>
        <end position="1801"/>
    </location>
</feature>
<feature type="repeat" description="Spectrin 15" evidence="4">
    <location>
        <begin position="1805"/>
        <end position="1907"/>
    </location>
</feature>
<feature type="repeat" description="Spectrin 16" evidence="4">
    <location>
        <begin position="1914"/>
        <end position="2014"/>
    </location>
</feature>
<feature type="repeat" description="Spectrin 17" evidence="4">
    <location>
        <begin position="2018"/>
        <end position="2097"/>
    </location>
</feature>
<feature type="domain" description="PH" evidence="6">
    <location>
        <begin position="2197"/>
        <end position="2307"/>
    </location>
</feature>
<feature type="region of interest" description="Actin-binding">
    <location>
        <begin position="2"/>
        <end position="275"/>
    </location>
</feature>
<feature type="region of interest" description="Interaction with ANK2" evidence="9">
    <location>
        <begin position="1563"/>
        <end position="2093"/>
    </location>
</feature>
<feature type="region of interest" description="Disordered" evidence="7">
    <location>
        <begin position="2089"/>
        <end position="2196"/>
    </location>
</feature>
<feature type="region of interest" description="Mediates interaction with CAMSAP1" evidence="11">
    <location>
        <begin position="2149"/>
        <end position="2177"/>
    </location>
</feature>
<feature type="region of interest" description="Disordered" evidence="7">
    <location>
        <begin position="2309"/>
        <end position="2364"/>
    </location>
</feature>
<feature type="compositionally biased region" description="Polar residues" evidence="7">
    <location>
        <begin position="2115"/>
        <end position="2131"/>
    </location>
</feature>
<feature type="compositionally biased region" description="Polar residues" evidence="7">
    <location>
        <begin position="2145"/>
        <end position="2166"/>
    </location>
</feature>
<feature type="compositionally biased region" description="Polar residues" evidence="7">
    <location>
        <begin position="2184"/>
        <end position="2196"/>
    </location>
</feature>
<feature type="compositionally biased region" description="Polar residues" evidence="7">
    <location>
        <begin position="2314"/>
        <end position="2341"/>
    </location>
</feature>
<feature type="compositionally biased region" description="Basic and acidic residues" evidence="7">
    <location>
        <begin position="2342"/>
        <end position="2357"/>
    </location>
</feature>
<feature type="modified residue" description="N-acetylthreonine" evidence="23 28 29">
    <location>
        <position position="2"/>
    </location>
</feature>
<feature type="modified residue" description="Phosphoserine" evidence="3">
    <location>
        <position position="36"/>
    </location>
</feature>
<feature type="modified residue" description="N6-acetyllysine" evidence="24">
    <location>
        <position position="90"/>
    </location>
</feature>
<feature type="modified residue" description="Phosphoserine" evidence="3">
    <location>
        <position position="228"/>
    </location>
</feature>
<feature type="modified residue" description="Phosphoserine" evidence="26">
    <location>
        <position position="817"/>
    </location>
</feature>
<feature type="modified residue" description="Phosphoserine" evidence="26">
    <location>
        <position position="825"/>
    </location>
</feature>
<feature type="modified residue" description="Phosphoserine" evidence="3">
    <location>
        <position position="903"/>
    </location>
</feature>
<feature type="modified residue" description="Phosphoserine" evidence="26">
    <location>
        <position position="1057"/>
    </location>
</feature>
<feature type="modified residue" description="Phosphoserine" evidence="3">
    <location>
        <position position="1076"/>
    </location>
</feature>
<feature type="modified residue" description="Phosphoserine" evidence="3">
    <location>
        <position position="1079"/>
    </location>
</feature>
<feature type="modified residue" description="Phosphoserine" evidence="31">
    <location>
        <position position="1237"/>
    </location>
</feature>
<feature type="modified residue" description="Phosphoserine" evidence="31">
    <location>
        <position position="1388"/>
    </location>
</feature>
<feature type="modified residue" description="Phosphoserine" evidence="25">
    <location>
        <position position="1447"/>
    </location>
</feature>
<feature type="modified residue" description="Phosphoserine" evidence="31">
    <location>
        <position position="1557"/>
    </location>
</feature>
<feature type="modified residue" description="Phosphotyrosine" evidence="3">
    <location>
        <position position="1805"/>
    </location>
</feature>
<feature type="modified residue" description="N6-acetyllysine" evidence="24">
    <location>
        <position position="1815"/>
    </location>
</feature>
<feature type="modified residue" description="N6-acetyllysine" evidence="24">
    <location>
        <position position="1913"/>
    </location>
</feature>
<feature type="modified residue" description="N6-acetyllysine" evidence="24">
    <location>
        <position position="1989"/>
    </location>
</feature>
<feature type="modified residue" description="Phosphoserine" evidence="17 18 19 20 22 26 27 30 31">
    <location>
        <position position="2102"/>
    </location>
</feature>
<feature type="modified residue" description="Phosphoserine" evidence="27 30">
    <location>
        <position position="2128"/>
    </location>
</feature>
<feature type="modified residue" description="Phosphoserine" evidence="17 20 21 25 26 27 30">
    <location>
        <position position="2138"/>
    </location>
</feature>
<feature type="modified residue" description="Phosphothreonine" evidence="3">
    <location>
        <position position="2147"/>
    </location>
</feature>
<feature type="modified residue" description="Phosphoserine" evidence="3">
    <location>
        <position position="2148"/>
    </location>
</feature>
<feature type="modified residue" description="Phosphothreonine" evidence="3">
    <location>
        <position position="2159"/>
    </location>
</feature>
<feature type="modified residue" description="Phosphoserine" evidence="27">
    <location>
        <position position="2160"/>
    </location>
</feature>
<feature type="modified residue" description="Phosphoserine" evidence="27">
    <location>
        <position position="2161"/>
    </location>
</feature>
<feature type="modified residue" description="Phosphoserine" evidence="27 30">
    <location>
        <position position="2164"/>
    </location>
</feature>
<feature type="modified residue" description="Phosphoserine" evidence="20 30 31">
    <location>
        <position position="2165"/>
    </location>
</feature>
<feature type="modified residue" description="Phosphoserine" evidence="20 25 26 27 30 31">
    <location>
        <position position="2169"/>
    </location>
</feature>
<feature type="modified residue" description="Phosphothreonine" evidence="3">
    <location>
        <position position="2171"/>
    </location>
</feature>
<feature type="modified residue" description="Phosphoserine" evidence="31">
    <location>
        <position position="2172"/>
    </location>
</feature>
<feature type="modified residue" description="Phosphoserine" evidence="3">
    <location>
        <position position="2184"/>
    </location>
</feature>
<feature type="modified residue" description="Phosphothreonine" evidence="20 30">
    <location>
        <position position="2187"/>
    </location>
</feature>
<feature type="modified residue" description="Phosphothreonine" evidence="3">
    <location>
        <position position="2195"/>
    </location>
</feature>
<feature type="modified residue" description="Phosphoserine" evidence="31">
    <location>
        <position position="2314"/>
    </location>
</feature>
<feature type="modified residue" description="Phosphoserine" evidence="27">
    <location>
        <position position="2319"/>
    </location>
</feature>
<feature type="modified residue" description="Phosphothreonine" evidence="20 26 27 31">
    <location>
        <position position="2320"/>
    </location>
</feature>
<feature type="modified residue" description="Phosphothreonine" evidence="20 30">
    <location>
        <position position="2328"/>
    </location>
</feature>
<feature type="modified residue" description="Phosphoserine" evidence="27">
    <location>
        <position position="2340"/>
    </location>
</feature>
<feature type="modified residue" description="Phosphoserine" evidence="20 25 26 30">
    <location>
        <position position="2341"/>
    </location>
</feature>
<feature type="glycosylation site" description="O-linked (GlcNAc) serine" evidence="1">
    <location>
        <position position="2324"/>
    </location>
</feature>
<feature type="splice variant" id="VSP_026054" description="In isoform 2." evidence="14 15">
    <original>MTTTVATDYDNIEIQQQYSDVNNRWDVDDWDNENSSARLFERSRIKALA</original>
    <variation>MELQRTSSISGPLSPAYTGQVPYNYNQLEGRFKQLQ</variation>
    <location>
        <begin position="1"/>
        <end position="49"/>
    </location>
</feature>
<feature type="splice variant" id="VSP_026055" description="In isoform 2." evidence="14 15">
    <original>MAETVDTSEMVNGATEQRTSSKESSPIPSPTSDRKAKTALPAQSAATLPARTQETPSAQMEGFLNRKHEWEAHNKKASSRSWHNV</original>
    <variation>VSYRSQTYQNYKNFNSRRTASDQPWSGL</variation>
    <location>
        <begin position="2141"/>
        <end position="2225"/>
    </location>
</feature>
<feature type="splice variant" id="VSP_000720" description="In isoform Short." evidence="13">
    <original>MAETVDTSEMVNGATEQRTSSKESSPIP</original>
    <variation>VSYRSQTYQNYKNFNSRRTASDQPWSGL</variation>
    <location>
        <begin position="2141"/>
        <end position="2168"/>
    </location>
</feature>
<feature type="splice variant" id="VSP_000721" description="In isoform Short." evidence="13">
    <location>
        <begin position="2169"/>
        <end position="2364"/>
    </location>
</feature>
<feature type="splice variant" id="VSP_026056" description="In isoform 2." evidence="14 15">
    <location>
        <begin position="2226"/>
        <end position="2364"/>
    </location>
</feature>
<feature type="sequence variant" id="VAR_086305" description="In DDISBA; affects function in neuronal axonal growth; reduced F-actin binding; disturbs cytoskeleton organization and dynamics." evidence="12">
    <original>T</original>
    <variation>I</variation>
    <location>
        <position position="59"/>
    </location>
</feature>
<feature type="sequence variant" id="VAR_086306" description="In DDISBA; affects function in neuronal axonal growth; decreased interaction with SPTAN1; disturbs cytoskeleton organization and dynamics." evidence="12">
    <location>
        <begin position="183"/>
        <end position="2364"/>
    </location>
</feature>
<feature type="sequence variant" id="VAR_086307" description="In DDISBA; affects function in neuronal axonal growth; forms cytosolic aggregates; decreased interaction with SPTAN1; disturbs cytoskeleton organization and dynamics; dbSNP:rs2103838734." evidence="12">
    <original>G</original>
    <variation>D</variation>
    <location>
        <position position="205"/>
    </location>
</feature>
<feature type="sequence variant" id="VAR_086308" description="In DDISBA; affects function in neuronal axonal growth; forms cytosolic aggregates; decreased interaction with SPTAN1; disturbs cytoskeleton organization and dynamics; dbSNP:rs1572690133." evidence="12">
    <original>G</original>
    <variation>S</variation>
    <location>
        <position position="205"/>
    </location>
</feature>
<feature type="sequence variant" id="VAR_086309" description="In DDISBA; affects function in neuronal axonal growth; forms cytosolic aggregates; disturbs cytoskeleton organization and dynamics." evidence="12">
    <original>L</original>
    <variation>H</variation>
    <location>
        <position position="247"/>
    </location>
</feature>
<feature type="sequence variant" id="VAR_086310" description="In DDISBA; affects function in neuronal axonal growth; forms cytosolic aggregates; disturbs cytoskeleton organization and dynamics; dbSNP:rs2103842476." evidence="12">
    <original>L</original>
    <variation>R</variation>
    <location>
        <position position="250"/>
    </location>
</feature>
<feature type="sequence variant" id="VAR_086311" description="In DDISBA; disturbs cytoskeleton organization and dynamics." evidence="12">
    <original>D</original>
    <variation>E</variation>
    <location>
        <position position="255"/>
    </location>
</feature>
<feature type="sequence variant" id="VAR_086312" description="In DDISBA; affects function in neuronal axonal growth; no effect on F-actin binding; disturbs cytoskeleton organization and dynamics." evidence="12">
    <original>T</original>
    <variation>A</variation>
    <location>
        <position position="268"/>
    </location>
</feature>
<feature type="sequence variant" id="VAR_086313" description="In DDISBA; affects function in neuronal axonal growth; no effect on F-actin binding; disturbs cytoskeleton organization and dynamics." evidence="12">
    <original>T</original>
    <variation>N</variation>
    <location>
        <position position="268"/>
    </location>
</feature>
<feature type="sequence variant" id="VAR_086314" description="In DDISBA; affects function in neuronal axonal growth; no effect on F-actin binding; disturbs cytoskeleton organization and dynamics; dbSNP:rs2103866356." evidence="12">
    <original>T</original>
    <variation>S</variation>
    <location>
        <position position="268"/>
    </location>
</feature>
<feature type="sequence variant" id="VAR_086315" description="In DDISBA; affects function in neuronal axonal growth; increased F-actin binding; disturbs cytoskeleton organization and dynamics; dbSNP:rs2103866400." evidence="12">
    <original>V</original>
    <variation>M</variation>
    <location>
        <position position="271"/>
    </location>
</feature>
<feature type="sequence variant" id="VAR_086316" description="In DDISBA; affects function in neuronal axonal growth; increased F-actin binding; disturbs cytoskeleton organization and dynamics." evidence="12">
    <original>H</original>
    <variation>R</variation>
    <location>
        <position position="275"/>
    </location>
</feature>
<feature type="sequence variant" id="VAR_086317" description="In DDISBA; uncertain significance." evidence="12">
    <original>F</original>
    <variation>L</variation>
    <location>
        <position position="344"/>
    </location>
</feature>
<feature type="sequence variant" id="VAR_086318" description="In DDISBA; dbSNP:rs1424773337." evidence="12">
    <original>R</original>
    <variation>Q</variation>
    <location>
        <position position="411"/>
    </location>
</feature>
<feature type="sequence variant" id="VAR_086319" description="In DDISBA; disturbs cytoskeleton organization and dynamics." evidence="12">
    <original>R</original>
    <variation>W</variation>
    <location>
        <position position="411"/>
    </location>
</feature>
<feature type="sequence variant" id="VAR_086320" description="In DDISBA; disturbs cytoskeleton organization and dynamics; dbSNP:rs2103898844." evidence="12">
    <original>E</original>
    <variation>Q</variation>
    <location>
        <position position="491"/>
    </location>
</feature>
<feature type="sequence variant" id="VAR_086321" description="In DDISBA; affects function in neuronal axonal growth; increased F-actin binding; disturbs cytoskeleton organization and dynamics; dbSNP:rs1029360897." evidence="12">
    <original>A</original>
    <variation>G</variation>
    <location>
        <position position="850"/>
    </location>
</feature>
<feature type="sequence variant" id="VAR_086322" description="In DDISBA; affects function in neuronal axonal growth; decreased ankyrin binding; disturbs cytoskeleton organization and dynamics." evidence="12">
    <location>
        <begin position="892"/>
        <end position="2364"/>
    </location>
</feature>
<feature type="sequence variant" id="VAR_086323" description="In DDISBA; affects function in neuronal axonal growth; decreased interaction with SPTAN1; disturbs cytoskeleton organization and dynamics; dbSNP:rs2103938644." evidence="12">
    <original>R</original>
    <variation>W</variation>
    <location>
        <position position="1003"/>
    </location>
</feature>
<feature type="sequence variant" id="VAR_086324" description="In DDISBA." evidence="12">
    <original>A</original>
    <variation>T</variation>
    <location>
        <position position="1086"/>
    </location>
</feature>
<feature type="sequence variant" id="VAR_086325" description="In DDISBA; distursb cytoskeleton organization and dynamics; dbSNP:rs1678722268." evidence="12">
    <original>E</original>
    <variation>D</variation>
    <location>
        <position position="1110"/>
    </location>
</feature>
<feature type="sequence variant" id="VAR_086326" description="In DDISBA; uncertain significance; dbSNP:rs754643448." evidence="12">
    <original>G</original>
    <variation>S</variation>
    <location>
        <position position="1398"/>
    </location>
</feature>
<feature type="sequence variant" id="VAR_032641" description="In dbSNP:rs1052790." evidence="8 10">
    <original>D</original>
    <variation>H</variation>
    <location>
        <position position="1411"/>
    </location>
</feature>
<feature type="sequence variant" id="VAR_086327" description="In DDISBA." evidence="12">
    <original>S</original>
    <variation>P</variation>
    <location>
        <position position="1674"/>
    </location>
</feature>
<feature type="sequence variant" id="VAR_086328" description="In DDISBA; affects function in neuronal axonal growth; decreased ankyrin binding; disturbs cytoskeleton organization and dynamics." evidence="12">
    <location>
        <begin position="1787"/>
        <end position="2364"/>
    </location>
</feature>
<feature type="sequence variant" id="VAR_086329" description="In DDISBA; disturbs cytoskeleton organization and dynamics; dbSNP:rs756389249." evidence="12">
    <original>E</original>
    <variation>Q</variation>
    <location>
        <position position="1886"/>
    </location>
</feature>
<feature type="sequence conflict" description="In Ref. 3; BAD92985." evidence="16" ref="3">
    <original>R</original>
    <variation>W</variation>
    <location>
        <position position="583"/>
    </location>
</feature>
<feature type="helix" evidence="32">
    <location>
        <begin position="174"/>
        <end position="186"/>
    </location>
</feature>
<feature type="turn" evidence="32">
    <location>
        <begin position="187"/>
        <end position="189"/>
    </location>
</feature>
<feature type="strand" evidence="32">
    <location>
        <begin position="196"/>
        <end position="199"/>
    </location>
</feature>
<feature type="helix" evidence="32">
    <location>
        <begin position="200"/>
        <end position="202"/>
    </location>
</feature>
<feature type="helix" evidence="32">
    <location>
        <begin position="206"/>
        <end position="215"/>
    </location>
</feature>
<feature type="helix" evidence="32">
    <location>
        <begin position="217"/>
        <end position="219"/>
    </location>
</feature>
<feature type="helix" evidence="32">
    <location>
        <begin position="222"/>
        <end position="224"/>
    </location>
</feature>
<feature type="helix" evidence="32">
    <location>
        <begin position="230"/>
        <end position="245"/>
    </location>
</feature>
<feature type="helix" evidence="32">
    <location>
        <begin position="253"/>
        <end position="256"/>
    </location>
</feature>
<feature type="strand" evidence="32">
    <location>
        <begin position="257"/>
        <end position="260"/>
    </location>
</feature>
<feature type="helix" evidence="32">
    <location>
        <begin position="263"/>
        <end position="277"/>
    </location>
</feature>
<feature type="helix" evidence="33">
    <location>
        <begin position="1697"/>
        <end position="1721"/>
    </location>
</feature>
<feature type="helix" evidence="33">
    <location>
        <begin position="1730"/>
        <end position="1767"/>
    </location>
</feature>
<feature type="helix" evidence="33">
    <location>
        <begin position="1773"/>
        <end position="1826"/>
    </location>
</feature>
<feature type="helix" evidence="33">
    <location>
        <begin position="1836"/>
        <end position="1852"/>
    </location>
</feature>
<feature type="helix" evidence="33">
    <location>
        <begin position="1854"/>
        <end position="1873"/>
    </location>
</feature>
<feature type="helix" evidence="33">
    <location>
        <begin position="1877"/>
        <end position="1935"/>
    </location>
</feature>
<feature type="helix" evidence="33">
    <location>
        <begin position="1943"/>
        <end position="1962"/>
    </location>
</feature>
<feature type="helix" evidence="33">
    <location>
        <begin position="1964"/>
        <end position="1979"/>
    </location>
</feature>
<feature type="helix" evidence="33">
    <location>
        <begin position="1985"/>
        <end position="2014"/>
    </location>
</feature>
<feature type="modified residue" description="Phosphoserine" evidence="20 25">
    <location sequence="Q01082-3">
        <position position="14"/>
    </location>
</feature>
<comment type="function">
    <text evidence="12">Fodrin, which seems to be involved in secretion, interacts with calmodulin in a calcium-dependent manner and is thus candidate for the calcium-dependent movement of the cytoskeleton at the membrane. Plays a critical role in central nervous system development and function.</text>
</comment>
<comment type="subunit">
    <text evidence="2 3 9 11 12">Interacts with CAMSAP1 (PubMed:24117850). Interacts with ANK2 (PubMed:15262991, PubMed:34211179). Interacts with CPNE4 (via VWFA domain) (By similarity). Like erythrocyte spectrin, the spectrin-like proteins are capable to form dimers which can further associate to tetramers (By similarity). Can form heterodimers with SPTAN1 (PubMed:34211179). Isoform Short cannot bind to the axonal protein fodaxin.</text>
</comment>
<comment type="interaction">
    <interactant intactId="EBI-351561">
        <id>Q01082</id>
    </interactant>
    <interactant intactId="EBI-374880">
        <id>Q99459</id>
        <label>CDC5L</label>
    </interactant>
    <organismsDiffer>false</organismsDiffer>
    <experiments>3</experiments>
</comment>
<comment type="interaction">
    <interactant intactId="EBI-351561">
        <id>Q01082</id>
    </interactant>
    <interactant intactId="EBI-529989">
        <id>Q9NRI5</id>
        <label>DISC1</label>
    </interactant>
    <organismsDiffer>false</organismsDiffer>
    <experiments>4</experiments>
</comment>
<comment type="interaction">
    <interactant intactId="EBI-351561">
        <id>Q01082</id>
    </interactant>
    <interactant intactId="EBI-1014509">
        <id>P35240-3</id>
        <label>NF2</label>
    </interactant>
    <organismsDiffer>false</organismsDiffer>
    <experiments>4</experiments>
</comment>
<comment type="interaction">
    <interactant intactId="EBI-351561">
        <id>Q01082</id>
    </interactant>
    <interactant intactId="EBI-375617">
        <id>P02549</id>
        <label>SPTA1</label>
    </interactant>
    <organismsDiffer>false</organismsDiffer>
    <experiments>3</experiments>
</comment>
<comment type="interaction">
    <interactant intactId="EBI-351561">
        <id>Q01082</id>
    </interactant>
    <interactant intactId="EBI-351450">
        <id>Q13813</id>
        <label>SPTAN1</label>
    </interactant>
    <organismsDiffer>false</organismsDiffer>
    <experiments>8</experiments>
</comment>
<comment type="subcellular location">
    <subcellularLocation>
        <location evidence="3">Cytoplasm</location>
        <location evidence="3">Cytoskeleton</location>
    </subcellularLocation>
    <subcellularLocation>
        <location evidence="3">Cytoplasm</location>
        <location evidence="3">Myofibril</location>
        <location evidence="3">Sarcomere</location>
        <location evidence="3">M line</location>
    </subcellularLocation>
    <subcellularLocation>
        <location evidence="12">Cytoplasm</location>
        <location evidence="12">Cytosol</location>
    </subcellularLocation>
    <subcellularLocation>
        <location evidence="12">Cell membrane</location>
    </subcellularLocation>
    <text evidence="3">Colocalizes with ANK2 in a distinct intracellular compartment of neonatal cardiomyocytes.</text>
</comment>
<comment type="subcellular location">
    <molecule>Isoform 2</molecule>
    <subcellularLocation>
        <location evidence="1">Cell membrane</location>
        <topology evidence="1">Peripheral membrane protein</topology>
        <orientation evidence="1">Cytoplasmic side</orientation>
    </subcellularLocation>
</comment>
<comment type="alternative products">
    <event type="alternative splicing"/>
    <isoform>
        <id>Q01082-1</id>
        <name>Long</name>
        <sequence type="displayed"/>
    </isoform>
    <isoform>
        <id>Q01082-2</id>
        <name>Short</name>
        <sequence type="described" ref="VSP_000720 VSP_000721"/>
    </isoform>
    <isoform>
        <id>Q01082-3</id>
        <name>2</name>
        <sequence type="described" ref="VSP_026054 VSP_026055 VSP_026056"/>
    </isoform>
</comment>
<comment type="tissue specificity">
    <text evidence="8">Isoform 2 is present in brain, lung and kidney (at protein level).</text>
</comment>
<comment type="disease" evidence="12">
    <disease id="DI-06193">
        <name>Developmental delay, impaired speech, and behavioral abnormalities</name>
        <acronym>DDISBA</acronym>
        <description>An autosomal dominant disorder characterized by developmental delay with speech impairment, mild to severe intellectual disability, and behavioral abnormalities including autistic features. Additional variable manifestations may include dysmorphic facial features, seizures, hypotonia, motor abnormalities, and hearing loss.</description>
        <dbReference type="MIM" id="619475"/>
    </disease>
    <text>The disease is caused by variants affecting the gene represented in this entry.</text>
</comment>
<comment type="similarity">
    <text evidence="16">Belongs to the spectrin family.</text>
</comment>
<comment type="sequence caution" evidence="16">
    <conflict type="erroneous initiation">
        <sequence resource="EMBL-CDS" id="BAD92985"/>
    </conflict>
    <text>Extended N-terminus.</text>
</comment>
<keyword id="KW-0002">3D-structure</keyword>
<keyword id="KW-0007">Acetylation</keyword>
<keyword id="KW-0117">Actin capping</keyword>
<keyword id="KW-0009">Actin-binding</keyword>
<keyword id="KW-0025">Alternative splicing</keyword>
<keyword id="KW-0112">Calmodulin-binding</keyword>
<keyword id="KW-1003">Cell membrane</keyword>
<keyword id="KW-0963">Cytoplasm</keyword>
<keyword id="KW-0206">Cytoskeleton</keyword>
<keyword id="KW-0225">Disease variant</keyword>
<keyword id="KW-0325">Glycoprotein</keyword>
<keyword id="KW-0991">Intellectual disability</keyword>
<keyword id="KW-0472">Membrane</keyword>
<keyword id="KW-0597">Phosphoprotein</keyword>
<keyword id="KW-1267">Proteomics identification</keyword>
<keyword id="KW-1185">Reference proteome</keyword>
<keyword id="KW-0677">Repeat</keyword>
<name>SPTB2_HUMAN</name>
<reference key="1">
    <citation type="journal article" date="1992" name="J. Biol. Chem.">
        <title>Characterization of human brain cDNA encoding the general isoform of beta-spectrin.</title>
        <authorList>
            <person name="Hu R.J."/>
            <person name="Watanabe M."/>
            <person name="Bennett V."/>
        </authorList>
    </citation>
    <scope>NUCLEOTIDE SEQUENCE [MRNA] (ISOFORM LONG)</scope>
    <scope>VARIANT HIS-1411</scope>
    <source>
        <tissue>Brain</tissue>
    </source>
</reference>
<reference key="2">
    <citation type="journal article" date="2001" name="J. Mol. Neurosci.">
        <title>A novel isoform of beta-spectrin II localizes to cerebellar Purkinje-cell bodies and interacts with neurofibromatosis type 2 gene product schwannomin.</title>
        <authorList>
            <person name="Chen Y."/>
            <person name="Yu P."/>
            <person name="Lu D."/>
            <person name="Tagle D.A."/>
            <person name="Cai T."/>
        </authorList>
    </citation>
    <scope>NUCLEOTIDE SEQUENCE [MRNA] (ISOFORM 2)</scope>
    <scope>TISSUE SPECIFICITY</scope>
    <scope>VARIANT HIS-1411</scope>
</reference>
<reference key="3">
    <citation type="submission" date="2005-03" db="EMBL/GenBank/DDBJ databases">
        <authorList>
            <person name="Totoki Y."/>
            <person name="Toyoda A."/>
            <person name="Takeda T."/>
            <person name="Sakaki Y."/>
            <person name="Tanaka A."/>
            <person name="Yokoyama S."/>
            <person name="Ohara O."/>
            <person name="Nagase T."/>
            <person name="Kikuno R.F."/>
        </authorList>
    </citation>
    <scope>NUCLEOTIDE SEQUENCE [LARGE SCALE MRNA] (ISOFORM LONG)</scope>
    <source>
        <tissue>Brain</tissue>
    </source>
</reference>
<reference key="4">
    <citation type="journal article" date="2005" name="Nature">
        <title>Generation and annotation of the DNA sequences of human chromosomes 2 and 4.</title>
        <authorList>
            <person name="Hillier L.W."/>
            <person name="Graves T.A."/>
            <person name="Fulton R.S."/>
            <person name="Fulton L.A."/>
            <person name="Pepin K.H."/>
            <person name="Minx P."/>
            <person name="Wagner-McPherson C."/>
            <person name="Layman D."/>
            <person name="Wylie K."/>
            <person name="Sekhon M."/>
            <person name="Becker M.C."/>
            <person name="Fewell G.A."/>
            <person name="Delehaunty K.D."/>
            <person name="Miner T.L."/>
            <person name="Nash W.E."/>
            <person name="Kremitzki C."/>
            <person name="Oddy L."/>
            <person name="Du H."/>
            <person name="Sun H."/>
            <person name="Bradshaw-Cordum H."/>
            <person name="Ali J."/>
            <person name="Carter J."/>
            <person name="Cordes M."/>
            <person name="Harris A."/>
            <person name="Isak A."/>
            <person name="van Brunt A."/>
            <person name="Nguyen C."/>
            <person name="Du F."/>
            <person name="Courtney L."/>
            <person name="Kalicki J."/>
            <person name="Ozersky P."/>
            <person name="Abbott S."/>
            <person name="Armstrong J."/>
            <person name="Belter E.A."/>
            <person name="Caruso L."/>
            <person name="Cedroni M."/>
            <person name="Cotton M."/>
            <person name="Davidson T."/>
            <person name="Desai A."/>
            <person name="Elliott G."/>
            <person name="Erb T."/>
            <person name="Fronick C."/>
            <person name="Gaige T."/>
            <person name="Haakenson W."/>
            <person name="Haglund K."/>
            <person name="Holmes A."/>
            <person name="Harkins R."/>
            <person name="Kim K."/>
            <person name="Kruchowski S.S."/>
            <person name="Strong C.M."/>
            <person name="Grewal N."/>
            <person name="Goyea E."/>
            <person name="Hou S."/>
            <person name="Levy A."/>
            <person name="Martinka S."/>
            <person name="Mead K."/>
            <person name="McLellan M.D."/>
            <person name="Meyer R."/>
            <person name="Randall-Maher J."/>
            <person name="Tomlinson C."/>
            <person name="Dauphin-Kohlberg S."/>
            <person name="Kozlowicz-Reilly A."/>
            <person name="Shah N."/>
            <person name="Swearengen-Shahid S."/>
            <person name="Snider J."/>
            <person name="Strong J.T."/>
            <person name="Thompson J."/>
            <person name="Yoakum M."/>
            <person name="Leonard S."/>
            <person name="Pearman C."/>
            <person name="Trani L."/>
            <person name="Radionenko M."/>
            <person name="Waligorski J.E."/>
            <person name="Wang C."/>
            <person name="Rock S.M."/>
            <person name="Tin-Wollam A.-M."/>
            <person name="Maupin R."/>
            <person name="Latreille P."/>
            <person name="Wendl M.C."/>
            <person name="Yang S.-P."/>
            <person name="Pohl C."/>
            <person name="Wallis J.W."/>
            <person name="Spieth J."/>
            <person name="Bieri T.A."/>
            <person name="Berkowicz N."/>
            <person name="Nelson J.O."/>
            <person name="Osborne J."/>
            <person name="Ding L."/>
            <person name="Meyer R."/>
            <person name="Sabo A."/>
            <person name="Shotland Y."/>
            <person name="Sinha P."/>
            <person name="Wohldmann P.E."/>
            <person name="Cook L.L."/>
            <person name="Hickenbotham M.T."/>
            <person name="Eldred J."/>
            <person name="Williams D."/>
            <person name="Jones T.A."/>
            <person name="She X."/>
            <person name="Ciccarelli F.D."/>
            <person name="Izaurralde E."/>
            <person name="Taylor J."/>
            <person name="Schmutz J."/>
            <person name="Myers R.M."/>
            <person name="Cox D.R."/>
            <person name="Huang X."/>
            <person name="McPherson J.D."/>
            <person name="Mardis E.R."/>
            <person name="Clifton S.W."/>
            <person name="Warren W.C."/>
            <person name="Chinwalla A.T."/>
            <person name="Eddy S.R."/>
            <person name="Marra M.A."/>
            <person name="Ovcharenko I."/>
            <person name="Furey T.S."/>
            <person name="Miller W."/>
            <person name="Eichler E.E."/>
            <person name="Bork P."/>
            <person name="Suyama M."/>
            <person name="Torrents D."/>
            <person name="Waterston R.H."/>
            <person name="Wilson R.K."/>
        </authorList>
    </citation>
    <scope>NUCLEOTIDE SEQUENCE [LARGE SCALE GENOMIC DNA]</scope>
</reference>
<reference key="5">
    <citation type="submission" date="2005-09" db="EMBL/GenBank/DDBJ databases">
        <authorList>
            <person name="Mural R.J."/>
            <person name="Istrail S."/>
            <person name="Sutton G.G."/>
            <person name="Florea L."/>
            <person name="Halpern A.L."/>
            <person name="Mobarry C.M."/>
            <person name="Lippert R."/>
            <person name="Walenz B."/>
            <person name="Shatkay H."/>
            <person name="Dew I."/>
            <person name="Miller J.R."/>
            <person name="Flanigan M.J."/>
            <person name="Edwards N.J."/>
            <person name="Bolanos R."/>
            <person name="Fasulo D."/>
            <person name="Halldorsson B.V."/>
            <person name="Hannenhalli S."/>
            <person name="Turner R."/>
            <person name="Yooseph S."/>
            <person name="Lu F."/>
            <person name="Nusskern D.R."/>
            <person name="Shue B.C."/>
            <person name="Zheng X.H."/>
            <person name="Zhong F."/>
            <person name="Delcher A.L."/>
            <person name="Huson D.H."/>
            <person name="Kravitz S.A."/>
            <person name="Mouchard L."/>
            <person name="Reinert K."/>
            <person name="Remington K.A."/>
            <person name="Clark A.G."/>
            <person name="Waterman M.S."/>
            <person name="Eichler E.E."/>
            <person name="Adams M.D."/>
            <person name="Hunkapiller M.W."/>
            <person name="Myers E.W."/>
            <person name="Venter J.C."/>
        </authorList>
    </citation>
    <scope>NUCLEOTIDE SEQUENCE [LARGE SCALE GENOMIC DNA]</scope>
</reference>
<reference key="6">
    <citation type="journal article" date="2004" name="Genome Res.">
        <title>The status, quality, and expansion of the NIH full-length cDNA project: the Mammalian Gene Collection (MGC).</title>
        <authorList>
            <consortium name="The MGC Project Team"/>
        </authorList>
    </citation>
    <scope>NUCLEOTIDE SEQUENCE [LARGE SCALE MRNA] (ISOFORM 2)</scope>
</reference>
<reference key="7">
    <citation type="journal article" date="1993" name="Genomics">
        <title>Cloning of a portion of the chromosomal gene and cDNA for human beta-fodrin, the nonerythroid form of beta-spectrin.</title>
        <authorList>
            <person name="Chang J.G."/>
            <person name="Scarpa A."/>
            <person name="Eddy R.L."/>
            <person name="Byers M.G."/>
            <person name="Harris A.S."/>
            <person name="Morrow J.S."/>
            <person name="Watkins P."/>
            <person name="Shows T.B."/>
            <person name="Forget B.G."/>
        </authorList>
    </citation>
    <scope>NUCLEOTIDE SEQUENCE [MRNA] OF 293-1544</scope>
</reference>
<reference key="8">
    <citation type="journal article" date="2000" name="J. Cell Sci.">
        <title>Identification of a novel C-terminal variant of betaII spectrin: two isoforms of betaII spectrin have distinct intracellular locations and activities.</title>
        <authorList>
            <person name="Hayes N.V.L."/>
            <person name="Scott C."/>
            <person name="Heerkens E."/>
            <person name="Ohanian V."/>
            <person name="Maggs A.M."/>
            <person name="Pinder J.C."/>
            <person name="Kordeli E."/>
            <person name="Baines A.J."/>
        </authorList>
    </citation>
    <scope>NUCLEOTIDE SEQUENCE [GENOMIC DNA / MRNA] OF 2087-2168 (ISOFORM SHORT)</scope>
    <source>
        <tissue>Skeletal muscle</tissue>
    </source>
</reference>
<reference key="9">
    <citation type="journal article" date="2004" name="J. Biol. Chem.">
        <title>Ankyrin-B targets beta2-spectrin to an intracellular compartment in neonatal cardiomyocytes.</title>
        <authorList>
            <person name="Mohler P.J."/>
            <person name="Yoon W."/>
            <person name="Bennett V."/>
        </authorList>
    </citation>
    <scope>INTERACTION WITH ANK2</scope>
</reference>
<reference key="10">
    <citation type="journal article" date="2006" name="Cell">
        <title>Global, in vivo, and site-specific phosphorylation dynamics in signaling networks.</title>
        <authorList>
            <person name="Olsen J.V."/>
            <person name="Blagoev B."/>
            <person name="Gnad F."/>
            <person name="Macek B."/>
            <person name="Kumar C."/>
            <person name="Mortensen P."/>
            <person name="Mann M."/>
        </authorList>
    </citation>
    <scope>PHOSPHORYLATION [LARGE SCALE ANALYSIS] AT SER-2102 AND SER-2138</scope>
    <scope>IDENTIFICATION BY MASS SPECTROMETRY [LARGE SCALE ANALYSIS]</scope>
    <source>
        <tissue>Cervix carcinoma</tissue>
    </source>
</reference>
<reference key="11">
    <citation type="journal article" date="2007" name="J. Proteome Res.">
        <title>Improved titanium dioxide enrichment of phosphopeptides from HeLa cells and high confident phosphopeptide identification by cross-validation of MS/MS and MS/MS/MS spectra.</title>
        <authorList>
            <person name="Yu L.R."/>
            <person name="Zhu Z."/>
            <person name="Chan K.C."/>
            <person name="Issaq H.J."/>
            <person name="Dimitrov D.S."/>
            <person name="Veenstra T.D."/>
        </authorList>
    </citation>
    <scope>PHOSPHORYLATION [LARGE SCALE ANALYSIS] AT SER-2102</scope>
    <scope>IDENTIFICATION BY MASS SPECTROMETRY [LARGE SCALE ANALYSIS]</scope>
    <source>
        <tissue>Cervix carcinoma</tissue>
    </source>
</reference>
<reference key="12">
    <citation type="journal article" date="2008" name="J. Proteome Res.">
        <title>Phosphoproteome of resting human platelets.</title>
        <authorList>
            <person name="Zahedi R.P."/>
            <person name="Lewandrowski U."/>
            <person name="Wiesner J."/>
            <person name="Wortelkamp S."/>
            <person name="Moebius J."/>
            <person name="Schuetz C."/>
            <person name="Walter U."/>
            <person name="Gambaryan S."/>
            <person name="Sickmann A."/>
        </authorList>
    </citation>
    <scope>PHOSPHORYLATION [LARGE SCALE ANALYSIS] AT SER-2102</scope>
    <scope>IDENTIFICATION BY MASS SPECTROMETRY [LARGE SCALE ANALYSIS]</scope>
    <source>
        <tissue>Platelet</tissue>
    </source>
</reference>
<reference key="13">
    <citation type="journal article" date="2008" name="Mol. Cell">
        <title>Kinase-selective enrichment enables quantitative phosphoproteomics of the kinome across the cell cycle.</title>
        <authorList>
            <person name="Daub H."/>
            <person name="Olsen J.V."/>
            <person name="Bairlein M."/>
            <person name="Gnad F."/>
            <person name="Oppermann F.S."/>
            <person name="Korner R."/>
            <person name="Greff Z."/>
            <person name="Keri G."/>
            <person name="Stemmann O."/>
            <person name="Mann M."/>
        </authorList>
    </citation>
    <scope>PHOSPHORYLATION [LARGE SCALE ANALYSIS] AT SER-2138</scope>
    <scope>IDENTIFICATION BY MASS SPECTROMETRY [LARGE SCALE ANALYSIS]</scope>
    <source>
        <tissue>Cervix carcinoma</tissue>
    </source>
</reference>
<reference key="14">
    <citation type="journal article" date="2008" name="Proc. Natl. Acad. Sci. U.S.A.">
        <title>A quantitative atlas of mitotic phosphorylation.</title>
        <authorList>
            <person name="Dephoure N."/>
            <person name="Zhou C."/>
            <person name="Villen J."/>
            <person name="Beausoleil S.A."/>
            <person name="Bakalarski C.E."/>
            <person name="Elledge S.J."/>
            <person name="Gygi S.P."/>
        </authorList>
    </citation>
    <scope>PHOSPHORYLATION [LARGE SCALE ANALYSIS] AT SER-2102; SER-2138; SER-2165; SER-2169; THR-2187; THR-2320; THR-2328 AND SER-2341</scope>
    <scope>PHOSPHORYLATION [LARGE SCALE ANALYSIS] AT SER-14 (ISOFORM 2)</scope>
    <scope>IDENTIFICATION BY MASS SPECTROMETRY [LARGE SCALE ANALYSIS]</scope>
    <source>
        <tissue>Cervix carcinoma</tissue>
    </source>
</reference>
<reference key="15">
    <citation type="journal article" date="2009" name="Anal. Chem.">
        <title>Lys-N and trypsin cover complementary parts of the phosphoproteome in a refined SCX-based approach.</title>
        <authorList>
            <person name="Gauci S."/>
            <person name="Helbig A.O."/>
            <person name="Slijper M."/>
            <person name="Krijgsveld J."/>
            <person name="Heck A.J."/>
            <person name="Mohammed S."/>
        </authorList>
    </citation>
    <scope>ACETYLATION [LARGE SCALE ANALYSIS] AT THR-2</scope>
    <scope>CLEAVAGE OF INITIATOR METHIONINE [LARGE SCALE ANALYSIS]</scope>
    <scope>IDENTIFICATION BY MASS SPECTROMETRY [LARGE SCALE ANALYSIS]</scope>
</reference>
<reference key="16">
    <citation type="journal article" date="2009" name="Mol. Cell. Proteomics">
        <title>Large-scale proteomics analysis of the human kinome.</title>
        <authorList>
            <person name="Oppermann F.S."/>
            <person name="Gnad F."/>
            <person name="Olsen J.V."/>
            <person name="Hornberger R."/>
            <person name="Greff Z."/>
            <person name="Keri G."/>
            <person name="Mann M."/>
            <person name="Daub H."/>
        </authorList>
    </citation>
    <scope>PHOSPHORYLATION [LARGE SCALE ANALYSIS] AT SER-2102</scope>
    <scope>IDENTIFICATION BY MASS SPECTROMETRY [LARGE SCALE ANALYSIS]</scope>
</reference>
<reference key="17">
    <citation type="journal article" date="2009" name="Sci. Signal.">
        <title>Quantitative phosphoproteomic analysis of T cell receptor signaling reveals system-wide modulation of protein-protein interactions.</title>
        <authorList>
            <person name="Mayya V."/>
            <person name="Lundgren D.H."/>
            <person name="Hwang S.-I."/>
            <person name="Rezaul K."/>
            <person name="Wu L."/>
            <person name="Eng J.K."/>
            <person name="Rodionov V."/>
            <person name="Han D.K."/>
        </authorList>
    </citation>
    <scope>PHOSPHORYLATION [LARGE SCALE ANALYSIS] AT SER-1447; SER-2138; SER-2169 AND SER-2341</scope>
    <scope>PHOSPHORYLATION [LARGE SCALE ANALYSIS] AT SER-14 (ISOFORM 2)</scope>
    <scope>IDENTIFICATION BY MASS SPECTROMETRY [LARGE SCALE ANALYSIS]</scope>
    <source>
        <tissue>Leukemic T-cell</tissue>
    </source>
</reference>
<reference key="18">
    <citation type="journal article" date="2009" name="Science">
        <title>Lysine acetylation targets protein complexes and co-regulates major cellular functions.</title>
        <authorList>
            <person name="Choudhary C."/>
            <person name="Kumar C."/>
            <person name="Gnad F."/>
            <person name="Nielsen M.L."/>
            <person name="Rehman M."/>
            <person name="Walther T.C."/>
            <person name="Olsen J.V."/>
            <person name="Mann M."/>
        </authorList>
    </citation>
    <scope>ACETYLATION [LARGE SCALE ANALYSIS] AT LYS-90; LYS-1815; LYS-1913 AND LYS-1989</scope>
    <scope>IDENTIFICATION BY MASS SPECTROMETRY [LARGE SCALE ANALYSIS]</scope>
</reference>
<reference key="19">
    <citation type="journal article" date="2010" name="Sci. Signal.">
        <title>Quantitative phosphoproteomics reveals widespread full phosphorylation site occupancy during mitosis.</title>
        <authorList>
            <person name="Olsen J.V."/>
            <person name="Vermeulen M."/>
            <person name="Santamaria A."/>
            <person name="Kumar C."/>
            <person name="Miller M.L."/>
            <person name="Jensen L.J."/>
            <person name="Gnad F."/>
            <person name="Cox J."/>
            <person name="Jensen T.S."/>
            <person name="Nigg E.A."/>
            <person name="Brunak S."/>
            <person name="Mann M."/>
        </authorList>
    </citation>
    <scope>PHOSPHORYLATION [LARGE SCALE ANALYSIS] AT SER-817; SER-825; SER-1057; SER-2102; SER-2138; SER-2169; THR-2320 AND SER-2341</scope>
    <scope>IDENTIFICATION BY MASS SPECTROMETRY [LARGE SCALE ANALYSIS]</scope>
    <source>
        <tissue>Cervix carcinoma</tissue>
    </source>
</reference>
<reference key="20">
    <citation type="journal article" date="2011" name="BMC Syst. Biol.">
        <title>Initial characterization of the human central proteome.</title>
        <authorList>
            <person name="Burkard T.R."/>
            <person name="Planyavsky M."/>
            <person name="Kaupe I."/>
            <person name="Breitwieser F.P."/>
            <person name="Buerckstuemmer T."/>
            <person name="Bennett K.L."/>
            <person name="Superti-Furga G."/>
            <person name="Colinge J."/>
        </authorList>
    </citation>
    <scope>IDENTIFICATION BY MASS SPECTROMETRY [LARGE SCALE ANALYSIS]</scope>
</reference>
<reference key="21">
    <citation type="journal article" date="2011" name="Sci. Signal.">
        <title>System-wide temporal characterization of the proteome and phosphoproteome of human embryonic stem cell differentiation.</title>
        <authorList>
            <person name="Rigbolt K.T."/>
            <person name="Prokhorova T.A."/>
            <person name="Akimov V."/>
            <person name="Henningsen J."/>
            <person name="Johansen P.T."/>
            <person name="Kratchmarova I."/>
            <person name="Kassem M."/>
            <person name="Mann M."/>
            <person name="Olsen J.V."/>
            <person name="Blagoev B."/>
        </authorList>
    </citation>
    <scope>PHOSPHORYLATION [LARGE SCALE ANALYSIS] AT SER-2102; SER-2128; SER-2138; SER-2160; SER-2161; SER-2164; SER-2169; SER-2319; THR-2320 AND SER-2340</scope>
    <scope>IDENTIFICATION BY MASS SPECTROMETRY [LARGE SCALE ANALYSIS]</scope>
</reference>
<reference key="22">
    <citation type="journal article" date="2012" name="Mol. Cell. Proteomics">
        <title>Comparative large-scale characterisation of plant vs. mammal proteins reveals similar and idiosyncratic N-alpha acetylation features.</title>
        <authorList>
            <person name="Bienvenut W.V."/>
            <person name="Sumpton D."/>
            <person name="Martinez A."/>
            <person name="Lilla S."/>
            <person name="Espagne C."/>
            <person name="Meinnel T."/>
            <person name="Giglione C."/>
        </authorList>
    </citation>
    <scope>ACETYLATION [LARGE SCALE ANALYSIS] AT THR-2</scope>
    <scope>CLEAVAGE OF INITIATOR METHIONINE [LARGE SCALE ANALYSIS]</scope>
    <scope>IDENTIFICATION BY MASS SPECTROMETRY [LARGE SCALE ANALYSIS]</scope>
</reference>
<reference key="23">
    <citation type="journal article" date="2012" name="Proc. Natl. Acad. Sci. U.S.A.">
        <title>N-terminal acetylome analyses and functional insights of the N-terminal acetyltransferase NatB.</title>
        <authorList>
            <person name="Van Damme P."/>
            <person name="Lasa M."/>
            <person name="Polevoda B."/>
            <person name="Gazquez C."/>
            <person name="Elosegui-Artola A."/>
            <person name="Kim D.S."/>
            <person name="De Juan-Pardo E."/>
            <person name="Demeyer K."/>
            <person name="Hole K."/>
            <person name="Larrea E."/>
            <person name="Timmerman E."/>
            <person name="Prieto J."/>
            <person name="Arnesen T."/>
            <person name="Sherman F."/>
            <person name="Gevaert K."/>
            <person name="Aldabe R."/>
        </authorList>
    </citation>
    <scope>ACETYLATION [LARGE SCALE ANALYSIS] AT THR-2</scope>
    <scope>CLEAVAGE OF INITIATOR METHIONINE [LARGE SCALE ANALYSIS]</scope>
    <scope>IDENTIFICATION BY MASS SPECTROMETRY [LARGE SCALE ANALYSIS]</scope>
</reference>
<reference key="24">
    <citation type="journal article" date="2013" name="J. Proteome Res.">
        <title>Toward a comprehensive characterization of a human cancer cell phosphoproteome.</title>
        <authorList>
            <person name="Zhou H."/>
            <person name="Di Palma S."/>
            <person name="Preisinger C."/>
            <person name="Peng M."/>
            <person name="Polat A.N."/>
            <person name="Heck A.J."/>
            <person name="Mohammed S."/>
        </authorList>
    </citation>
    <scope>PHOSPHORYLATION [LARGE SCALE ANALYSIS] AT SER-2102; SER-2128; SER-2138; SER-2164; SER-2165; SER-2169; THR-2187; THR-2328 AND SER-2341</scope>
    <scope>IDENTIFICATION BY MASS SPECTROMETRY [LARGE SCALE ANALYSIS]</scope>
    <source>
        <tissue>Cervix carcinoma</tissue>
        <tissue>Erythroleukemia</tissue>
    </source>
</reference>
<reference key="25">
    <citation type="journal article" date="2014" name="J. Neurochem.">
        <title>A conserved sequence in CAMSAP1 (calmodulin regulated spectrin-associated protein 1) links its interaction with spectrin and calmodulin to neurite outgrowth.</title>
        <authorList>
            <person name="King M.D."/>
            <person name="Phillips G.W."/>
            <person name="Bignone P.A."/>
            <person name="Hayes N.V."/>
            <person name="Pinder J.C."/>
            <person name="Baines A.J."/>
        </authorList>
    </citation>
    <scope>INTERACTION WITH CAMSAP1</scope>
</reference>
<reference key="26">
    <citation type="journal article" date="2014" name="J. Proteomics">
        <title>An enzyme assisted RP-RPLC approach for in-depth analysis of human liver phosphoproteome.</title>
        <authorList>
            <person name="Bian Y."/>
            <person name="Song C."/>
            <person name="Cheng K."/>
            <person name="Dong M."/>
            <person name="Wang F."/>
            <person name="Huang J."/>
            <person name="Sun D."/>
            <person name="Wang L."/>
            <person name="Ye M."/>
            <person name="Zou H."/>
        </authorList>
    </citation>
    <scope>PHOSPHORYLATION [LARGE SCALE ANALYSIS] AT SER-1237; SER-1388; SER-1557; SER-2102; SER-2165; SER-2169; SER-2172; SER-2314 AND THR-2320</scope>
    <scope>IDENTIFICATION BY MASS SPECTROMETRY [LARGE SCALE ANALYSIS]</scope>
    <source>
        <tissue>Liver</tissue>
    </source>
</reference>
<reference key="27">
    <citation type="journal article" date="2015" name="Proteomics">
        <title>N-terminome analysis of the human mitochondrial proteome.</title>
        <authorList>
            <person name="Vaca Jacome A.S."/>
            <person name="Rabilloud T."/>
            <person name="Schaeffer-Reiss C."/>
            <person name="Rompais M."/>
            <person name="Ayoub D."/>
            <person name="Lane L."/>
            <person name="Bairoch A."/>
            <person name="Van Dorsselaer A."/>
            <person name="Carapito C."/>
        </authorList>
    </citation>
    <scope>IDENTIFICATION BY MASS SPECTROMETRY [LARGE SCALE ANALYSIS]</scope>
</reference>
<reference key="28">
    <citation type="journal article" date="2021" name="Nat. Genet.">
        <title>Pathogenic SPTBN1 variants cause an autosomal dominant neurodevelopmental syndrome.</title>
        <authorList>
            <consortium name="Undiagnosed Diseases Network"/>
            <consortium name="Genomics England Research Consortium"/>
            <person name="Cousin M.A."/>
            <person name="Creighton B.A."/>
            <person name="Breau K.A."/>
            <person name="Spillmann R.C."/>
            <person name="Torti E."/>
            <person name="Dontu S."/>
            <person name="Tripathi S."/>
            <person name="Ajit D."/>
            <person name="Edwards R.J."/>
            <person name="Afriyie S."/>
            <person name="Bay J.C."/>
            <person name="Harper K.M."/>
            <person name="Beltran A.A."/>
            <person name="Munoz L.J."/>
            <person name="Falcon Rodriguez L."/>
            <person name="Stankewich M.C."/>
            <person name="Person R.E."/>
            <person name="Si Y."/>
            <person name="Normand E.A."/>
            <person name="Blevins A."/>
            <person name="May A.S."/>
            <person name="Bier L."/>
            <person name="Aggarwal V."/>
            <person name="Mancini G.M.S."/>
            <person name="van Slegtenhorst M.A."/>
            <person name="Cremer K."/>
            <person name="Becker J."/>
            <person name="Engels H."/>
            <person name="Aretz S."/>
            <person name="MacKenzie J.J."/>
            <person name="Brilstra E."/>
            <person name="van Gassen K.L.I."/>
            <person name="van Jaarsveld R.H."/>
            <person name="Oegema R."/>
            <person name="Parsons G.M."/>
            <person name="Mark P."/>
            <person name="Helbig I."/>
            <person name="McKeown S.E."/>
            <person name="Stratton R."/>
            <person name="Cogne B."/>
            <person name="Isidor B."/>
            <person name="Cacheiro P."/>
            <person name="Smedley D."/>
            <person name="Firth H.V."/>
            <person name="Bierhals T."/>
            <person name="Kloth K."/>
            <person name="Weiss D."/>
            <person name="Fairley C."/>
            <person name="Shieh J.T."/>
            <person name="Kritzer A."/>
            <person name="Jayakar P."/>
            <person name="Kurtz-Nelson E."/>
            <person name="Bernier R.A."/>
            <person name="Wang T."/>
            <person name="Eichler E.E."/>
            <person name="van de Laar I.M.B.H."/>
            <person name="McConkie-Rosell A."/>
            <person name="McDonald M.T."/>
            <person name="Kemppainen J."/>
            <person name="Lanpher B.C."/>
            <person name="Schultz-Rogers L.E."/>
            <person name="Gunderson L.B."/>
            <person name="Pichurin P.N."/>
            <person name="Yoon G."/>
            <person name="Zech M."/>
            <person name="Jech R."/>
            <person name="Winkelmann J."/>
            <person name="Beltran A.S."/>
            <person name="Zimmermann M.T."/>
            <person name="Temple B."/>
            <person name="Moy S.S."/>
            <person name="Klee E.W."/>
            <person name="Tan Q.K."/>
            <person name="Lorenzo D.N."/>
        </authorList>
    </citation>
    <scope>INVOLVEMENT IN DDISBA</scope>
    <scope>VARIANTS DDISBA ILE-59; 183-CYS--LYS-2364 DEL; ASP-205; SER-205; HIS-247; ARG-250; GLU-255; ALA-268; ASN-268; SER-268; MET-271; ARG-275; LEU-344; GLN-411; TRP-411; GLN-491; GLY-850; 892-GLU--LYS-2364 DEL; TRP-1003; THR-1086; ASP-1110; SER-1398; PRO-1674; 1787-TRP--LYS-2364 DEL AND GLN-1886</scope>
    <scope>CHARACTERIZATION OF VARIANTS DDISBA ILE-59; 183-CYS--LYS-2364 DEL; ASP-205; SER-205; HIS-247; ARG-250; GLU-255; ALA-268; ASN-268; SER-268; MET-271; ARG-275; LEU-344; GLN-411; TRP-411; GLN-491; GLY-850; 892-GLU--LYS-2364 DEL; TRP-1003; THR-1086; ASP-1110; SER-1398; PRO-1674; 1787-TRP--LYS-2364 DEL AND GLN-1886</scope>
    <scope>FUNCTION</scope>
    <scope>SUBCELLULAR LOCATION</scope>
    <scope>INTERACTION WITH ANK2</scope>
</reference>
<reference key="29">
    <citation type="journal article" date="1997" name="Nat. Struct. Biol.">
        <title>Crystal structure of a calponin homology domain.</title>
        <authorList>
            <person name="Carugo K.D."/>
            <person name="Banuelos S."/>
            <person name="Saraste M."/>
        </authorList>
    </citation>
    <scope>X-RAY CRYSTALLOGRAPHY (2.0 ANGSTROMS) OF 173-280</scope>
</reference>
<reference key="30">
    <citation type="journal article" date="1998" name="Structure">
        <title>Structural comparisons of calponin homology domains: implications for actin binding.</title>
        <authorList>
            <person name="Banuelos S."/>
            <person name="Saraste M."/>
            <person name="Carugo K.D."/>
        </authorList>
    </citation>
    <scope>X-RAY CRYSTALLOGRAPHY (1.1 ANGSTROMS) OF 173-281</scope>
</reference>